<feature type="chain" id="PRO_0000373812" description="2-hydroxy-6-oxo-6-phenylhexa-2,4-dienoate hydrolase">
    <location>
        <begin position="1"/>
        <end position="286"/>
    </location>
</feature>
<feature type="domain" description="AB hydrolase-1" evidence="1">
    <location>
        <begin position="173"/>
        <end position="271"/>
    </location>
</feature>
<feature type="active site" description="Proton acceptor" evidence="2">
    <location>
        <position position="265"/>
    </location>
</feature>
<feature type="binding site" evidence="2">
    <location>
        <begin position="42"/>
        <end position="43"/>
    </location>
    <ligand>
        <name>substrate</name>
    </ligand>
</feature>
<feature type="binding site" evidence="2">
    <location>
        <position position="51"/>
    </location>
    <ligand>
        <name>substrate</name>
    </ligand>
</feature>
<feature type="binding site" evidence="2">
    <location>
        <position position="111"/>
    </location>
    <ligand>
        <name>substrate</name>
    </ligand>
</feature>
<feature type="binding site" evidence="2">
    <location>
        <position position="180"/>
    </location>
    <ligand>
        <name>substrate</name>
    </ligand>
</feature>
<feature type="binding site" evidence="2">
    <location>
        <position position="190"/>
    </location>
    <ligand>
        <name>substrate</name>
    </ligand>
</feature>
<feature type="binding site" evidence="2">
    <location>
        <position position="266"/>
    </location>
    <ligand>
        <name>substrate</name>
    </ligand>
</feature>
<feature type="site" description="Transition state stabilizer" evidence="2">
    <location>
        <position position="112"/>
    </location>
</feature>
<dbReference type="EC" id="3.7.1.8" evidence="2"/>
<dbReference type="EMBL" id="AY028943">
    <property type="protein sequence ID" value="AAK31622.1"/>
    <property type="status" value="ALT_FRAME"/>
    <property type="molecule type" value="Genomic_DNA"/>
</dbReference>
<dbReference type="SMR" id="Q8KRD3"/>
<dbReference type="ESTHER" id="delac-bphd">
    <property type="family name" value="Carbon-carbon_bond_hydrolase"/>
</dbReference>
<dbReference type="MEROPS" id="S33.016"/>
<dbReference type="UniPathway" id="UPA00155">
    <property type="reaction ID" value="UER00253"/>
</dbReference>
<dbReference type="GO" id="GO:0016020">
    <property type="term" value="C:membrane"/>
    <property type="evidence" value="ECO:0007669"/>
    <property type="project" value="TreeGrafter"/>
</dbReference>
<dbReference type="GO" id="GO:0018774">
    <property type="term" value="F:2,6-dioxo-6-phenylhexa-3-enoate hydrolase activity"/>
    <property type="evidence" value="ECO:0007669"/>
    <property type="project" value="RHEA"/>
</dbReference>
<dbReference type="GO" id="GO:0018771">
    <property type="term" value="F:2-hydroxy-6-oxonona-2,4-dienedioate hydrolase activity"/>
    <property type="evidence" value="ECO:0007669"/>
    <property type="project" value="UniProtKB-UniRule"/>
</dbReference>
<dbReference type="GO" id="GO:0070980">
    <property type="term" value="P:biphenyl catabolic process"/>
    <property type="evidence" value="ECO:0007669"/>
    <property type="project" value="UniProtKB-UniRule"/>
</dbReference>
<dbReference type="Gene3D" id="3.40.50.1820">
    <property type="entry name" value="alpha/beta hydrolase"/>
    <property type="match status" value="1"/>
</dbReference>
<dbReference type="HAMAP" id="MF_01688">
    <property type="entry name" value="Biphenyl_BphD"/>
    <property type="match status" value="1"/>
</dbReference>
<dbReference type="InterPro" id="IPR000073">
    <property type="entry name" value="AB_hydrolase_1"/>
</dbReference>
<dbReference type="InterPro" id="IPR029058">
    <property type="entry name" value="AB_hydrolase_fold"/>
</dbReference>
<dbReference type="InterPro" id="IPR050266">
    <property type="entry name" value="AB_hydrolase_sf"/>
</dbReference>
<dbReference type="InterPro" id="IPR017727">
    <property type="entry name" value="HOPD_hydrolase_BphD"/>
</dbReference>
<dbReference type="InterPro" id="IPR001763">
    <property type="entry name" value="Rhodanese-like_dom"/>
</dbReference>
<dbReference type="NCBIfam" id="TIGR03343">
    <property type="entry name" value="biphenyl_bphD"/>
    <property type="match status" value="1"/>
</dbReference>
<dbReference type="PANTHER" id="PTHR43798:SF33">
    <property type="entry name" value="HYDROLASE, PUTATIVE (AFU_ORTHOLOGUE AFUA_2G14860)-RELATED"/>
    <property type="match status" value="1"/>
</dbReference>
<dbReference type="PANTHER" id="PTHR43798">
    <property type="entry name" value="MONOACYLGLYCEROL LIPASE"/>
    <property type="match status" value="1"/>
</dbReference>
<dbReference type="Pfam" id="PF00561">
    <property type="entry name" value="Abhydrolase_1"/>
    <property type="match status" value="1"/>
</dbReference>
<dbReference type="PRINTS" id="PR00111">
    <property type="entry name" value="ABHYDROLASE"/>
</dbReference>
<dbReference type="SUPFAM" id="SSF53474">
    <property type="entry name" value="alpha/beta-Hydrolases"/>
    <property type="match status" value="1"/>
</dbReference>
<evidence type="ECO:0000255" key="1"/>
<evidence type="ECO:0000255" key="2">
    <source>
        <dbReference type="HAMAP-Rule" id="MF_01688"/>
    </source>
</evidence>
<evidence type="ECO:0000305" key="3"/>
<keyword id="KW-0058">Aromatic hydrocarbons catabolism</keyword>
<keyword id="KW-0378">Hydrolase</keyword>
<reference key="1">
    <citation type="submission" date="2001-03" db="EMBL/GenBank/DDBJ databases">
        <authorList>
            <person name="Lee N.-R."/>
            <person name="Min K.-H."/>
        </authorList>
    </citation>
    <scope>NUCLEOTIDE SEQUENCE [GENOMIC DNA]</scope>
    <source>
        <strain>SMN4</strain>
    </source>
</reference>
<accession>Q8KRD3</accession>
<gene>
    <name evidence="2" type="primary">bphD</name>
</gene>
<protein>
    <recommendedName>
        <fullName evidence="2">2-hydroxy-6-oxo-6-phenylhexa-2,4-dienoate hydrolase</fullName>
        <shortName evidence="2">HOPDA hydrolase</shortName>
        <ecNumber evidence="2">3.7.1.8</ecNumber>
    </recommendedName>
    <alternativeName>
        <fullName evidence="2">2,6-dioxo-6-phenylhexa-3-enoate hydrolase</fullName>
    </alternativeName>
</protein>
<name>BPHD_DELAC</name>
<proteinExistence type="inferred from homology"/>
<sequence>MSELNESTTSKFVTINEKGLSNFRIHLNDAGEGEAVIMLHGGGPGAGGWSNYYRNIGPFVKAGYRVILKDAPALNKSDTVVMHEQRGVVYARSVKGMMHVLGIEEAHVVRKSMAGAGALNFALELPERTGKLILMGPGGLGNSLFTAMPMEGIKLLFKLYAEPSLDTLKQMLNVFLFDQSLITDELVQGRWANIQRNPEHLKNFLLSAQKVPLSAWDVSPRLPEIKAKTLVTWGRDDRFVPLDHGLKLVANMPDAQLHVFPRCVHWAQWEHADAFNRLTLDFLANG</sequence>
<comment type="function">
    <text evidence="2">Catalyzes an unusual C-C bond hydrolysis of 2-hydroxy-6-oxo-6-phenylhexa-2,4-dienoic acid (HOPDA) to produce benzoic acid and 2-hydroxy-2,4-pentadienoic acid (HPD).</text>
</comment>
<comment type="catalytic activity">
    <reaction evidence="2">
        <text>2,6-dioxo-6-phenylhexa-3-enoate + H2O = 2-oxopent-4-enoate + benzoate + H(+)</text>
        <dbReference type="Rhea" id="RHEA:17161"/>
        <dbReference type="ChEBI" id="CHEBI:11641"/>
        <dbReference type="ChEBI" id="CHEBI:15377"/>
        <dbReference type="ChEBI" id="CHEBI:15378"/>
        <dbReference type="ChEBI" id="CHEBI:16150"/>
        <dbReference type="ChEBI" id="CHEBI:64675"/>
        <dbReference type="EC" id="3.7.1.8"/>
    </reaction>
</comment>
<comment type="pathway">
    <text evidence="2">Xenobiotic degradation; biphenyl degradation; 2-hydroxy-2,4-pentadienoate and benzoate from biphenyl: step 4/4.</text>
</comment>
<comment type="subunit">
    <text evidence="2">Homodimer.</text>
</comment>
<comment type="similarity">
    <text evidence="2">Belongs to the AB hydrolase superfamily. BphD family.</text>
</comment>
<comment type="sequence caution" evidence="3">
    <conflict type="frameshift">
        <sequence resource="EMBL-CDS" id="AAK31622"/>
    </conflict>
</comment>
<organism>
    <name type="scientific">Delftia acidovorans</name>
    <name type="common">Pseudomonas acidovorans</name>
    <name type="synonym">Comamonas acidovorans</name>
    <dbReference type="NCBI Taxonomy" id="80866"/>
    <lineage>
        <taxon>Bacteria</taxon>
        <taxon>Pseudomonadati</taxon>
        <taxon>Pseudomonadota</taxon>
        <taxon>Betaproteobacteria</taxon>
        <taxon>Burkholderiales</taxon>
        <taxon>Comamonadaceae</taxon>
        <taxon>Delftia</taxon>
    </lineage>
</organism>